<feature type="chain" id="PRO_0000313054" description="Mediator of RNA polymerase II transcription subunit 12-like protein">
    <location>
        <begin position="1"/>
        <end position="2157"/>
    </location>
</feature>
<feature type="region of interest" description="Disordered" evidence="3">
    <location>
        <begin position="1"/>
        <end position="31"/>
    </location>
</feature>
<feature type="region of interest" description="Disordered" evidence="3">
    <location>
        <begin position="1437"/>
        <end position="1461"/>
    </location>
</feature>
<feature type="region of interest" description="Disordered" evidence="3">
    <location>
        <begin position="1724"/>
        <end position="1807"/>
    </location>
</feature>
<feature type="region of interest" description="Disordered" evidence="3">
    <location>
        <begin position="2040"/>
        <end position="2157"/>
    </location>
</feature>
<feature type="compositionally biased region" description="Basic and acidic residues" evidence="3">
    <location>
        <begin position="1437"/>
        <end position="1456"/>
    </location>
</feature>
<feature type="compositionally biased region" description="Basic residues" evidence="3">
    <location>
        <begin position="1771"/>
        <end position="1780"/>
    </location>
</feature>
<feature type="compositionally biased region" description="Low complexity" evidence="3">
    <location>
        <begin position="2063"/>
        <end position="2076"/>
    </location>
</feature>
<feature type="compositionally biased region" description="Low complexity" evidence="3">
    <location>
        <begin position="2083"/>
        <end position="2101"/>
    </location>
</feature>
<feature type="compositionally biased region" description="Low complexity" evidence="3">
    <location>
        <begin position="2116"/>
        <end position="2136"/>
    </location>
</feature>
<feature type="compositionally biased region" description="Polar residues" evidence="3">
    <location>
        <begin position="2137"/>
        <end position="2148"/>
    </location>
</feature>
<feature type="modified residue" description="Phosphothreonine" evidence="2">
    <location>
        <position position="462"/>
    </location>
</feature>
<feature type="splice variant" id="VSP_029998" description="In isoform 3 and isoform 4." evidence="4 5">
    <original>K</original>
    <variation>KELPLAKSGVPQ</variation>
    <location>
        <position position="132"/>
    </location>
</feature>
<feature type="splice variant" id="VSP_029999" description="In isoform 2." evidence="5">
    <original>E</original>
    <variation>EEHSVMARLGLGSGATHIFDDVDKSDFKSDPASEFP</variation>
    <location>
        <position position="656"/>
    </location>
</feature>
<feature type="splice variant" id="VSP_030000" description="In isoform 3." evidence="5">
    <original>DESSSHECNQRTILLYGVGKERDEARHQLK</original>
    <variation>VRHVSISVYHDDFIRPSVIGCQIIHSLCLL</variation>
    <location>
        <begin position="716"/>
        <end position="745"/>
    </location>
</feature>
<feature type="splice variant" id="VSP_030001" description="In isoform 4." evidence="4">
    <original>DESSSH</original>
    <variation>GILAMW</variation>
    <location>
        <begin position="716"/>
        <end position="721"/>
    </location>
</feature>
<feature type="splice variant" id="VSP_030002" description="In isoform 4." evidence="4">
    <location>
        <begin position="722"/>
        <end position="2157"/>
    </location>
</feature>
<feature type="splice variant" id="VSP_030003" description="In isoform 3." evidence="5">
    <location>
        <begin position="746"/>
        <end position="2157"/>
    </location>
</feature>
<gene>
    <name type="primary">Med12l</name>
    <name type="synonym">Kiaa3007</name>
</gene>
<reference key="1">
    <citation type="journal article" date="2003" name="DNA Res.">
        <title>Prediction of the coding sequences of mouse homologues of KIAA gene: III. The complete nucleotide sequences of 500 mouse KIAA-homologous cDNAs identified by screening of terminal sequences of cDNA clones randomly sampled from size-fractionated libraries.</title>
        <authorList>
            <person name="Okazaki N."/>
            <person name="Kikuno R."/>
            <person name="Ohara R."/>
            <person name="Inamoto S."/>
            <person name="Koseki H."/>
            <person name="Hiraoka S."/>
            <person name="Saga Y."/>
            <person name="Nagase T."/>
            <person name="Ohara O."/>
            <person name="Koga H."/>
        </authorList>
    </citation>
    <scope>NUCLEOTIDE SEQUENCE [LARGE SCALE MRNA] (ISOFORM 4)</scope>
    <source>
        <tissue>Embryonic tail</tissue>
    </source>
</reference>
<reference key="2">
    <citation type="journal article" date="2005" name="Science">
        <title>The transcriptional landscape of the mammalian genome.</title>
        <authorList>
            <person name="Carninci P."/>
            <person name="Kasukawa T."/>
            <person name="Katayama S."/>
            <person name="Gough J."/>
            <person name="Frith M.C."/>
            <person name="Maeda N."/>
            <person name="Oyama R."/>
            <person name="Ravasi T."/>
            <person name="Lenhard B."/>
            <person name="Wells C."/>
            <person name="Kodzius R."/>
            <person name="Shimokawa K."/>
            <person name="Bajic V.B."/>
            <person name="Brenner S.E."/>
            <person name="Batalov S."/>
            <person name="Forrest A.R."/>
            <person name="Zavolan M."/>
            <person name="Davis M.J."/>
            <person name="Wilming L.G."/>
            <person name="Aidinis V."/>
            <person name="Allen J.E."/>
            <person name="Ambesi-Impiombato A."/>
            <person name="Apweiler R."/>
            <person name="Aturaliya R.N."/>
            <person name="Bailey T.L."/>
            <person name="Bansal M."/>
            <person name="Baxter L."/>
            <person name="Beisel K.W."/>
            <person name="Bersano T."/>
            <person name="Bono H."/>
            <person name="Chalk A.M."/>
            <person name="Chiu K.P."/>
            <person name="Choudhary V."/>
            <person name="Christoffels A."/>
            <person name="Clutterbuck D.R."/>
            <person name="Crowe M.L."/>
            <person name="Dalla E."/>
            <person name="Dalrymple B.P."/>
            <person name="de Bono B."/>
            <person name="Della Gatta G."/>
            <person name="di Bernardo D."/>
            <person name="Down T."/>
            <person name="Engstrom P."/>
            <person name="Fagiolini M."/>
            <person name="Faulkner G."/>
            <person name="Fletcher C.F."/>
            <person name="Fukushima T."/>
            <person name="Furuno M."/>
            <person name="Futaki S."/>
            <person name="Gariboldi M."/>
            <person name="Georgii-Hemming P."/>
            <person name="Gingeras T.R."/>
            <person name="Gojobori T."/>
            <person name="Green R.E."/>
            <person name="Gustincich S."/>
            <person name="Harbers M."/>
            <person name="Hayashi Y."/>
            <person name="Hensch T.K."/>
            <person name="Hirokawa N."/>
            <person name="Hill D."/>
            <person name="Huminiecki L."/>
            <person name="Iacono M."/>
            <person name="Ikeo K."/>
            <person name="Iwama A."/>
            <person name="Ishikawa T."/>
            <person name="Jakt M."/>
            <person name="Kanapin A."/>
            <person name="Katoh M."/>
            <person name="Kawasawa Y."/>
            <person name="Kelso J."/>
            <person name="Kitamura H."/>
            <person name="Kitano H."/>
            <person name="Kollias G."/>
            <person name="Krishnan S.P."/>
            <person name="Kruger A."/>
            <person name="Kummerfeld S.K."/>
            <person name="Kurochkin I.V."/>
            <person name="Lareau L.F."/>
            <person name="Lazarevic D."/>
            <person name="Lipovich L."/>
            <person name="Liu J."/>
            <person name="Liuni S."/>
            <person name="McWilliam S."/>
            <person name="Madan Babu M."/>
            <person name="Madera M."/>
            <person name="Marchionni L."/>
            <person name="Matsuda H."/>
            <person name="Matsuzawa S."/>
            <person name="Miki H."/>
            <person name="Mignone F."/>
            <person name="Miyake S."/>
            <person name="Morris K."/>
            <person name="Mottagui-Tabar S."/>
            <person name="Mulder N."/>
            <person name="Nakano N."/>
            <person name="Nakauchi H."/>
            <person name="Ng P."/>
            <person name="Nilsson R."/>
            <person name="Nishiguchi S."/>
            <person name="Nishikawa S."/>
            <person name="Nori F."/>
            <person name="Ohara O."/>
            <person name="Okazaki Y."/>
            <person name="Orlando V."/>
            <person name="Pang K.C."/>
            <person name="Pavan W.J."/>
            <person name="Pavesi G."/>
            <person name="Pesole G."/>
            <person name="Petrovsky N."/>
            <person name="Piazza S."/>
            <person name="Reed J."/>
            <person name="Reid J.F."/>
            <person name="Ring B.Z."/>
            <person name="Ringwald M."/>
            <person name="Rost B."/>
            <person name="Ruan Y."/>
            <person name="Salzberg S.L."/>
            <person name="Sandelin A."/>
            <person name="Schneider C."/>
            <person name="Schoenbach C."/>
            <person name="Sekiguchi K."/>
            <person name="Semple C.A."/>
            <person name="Seno S."/>
            <person name="Sessa L."/>
            <person name="Sheng Y."/>
            <person name="Shibata Y."/>
            <person name="Shimada H."/>
            <person name="Shimada K."/>
            <person name="Silva D."/>
            <person name="Sinclair B."/>
            <person name="Sperling S."/>
            <person name="Stupka E."/>
            <person name="Sugiura K."/>
            <person name="Sultana R."/>
            <person name="Takenaka Y."/>
            <person name="Taki K."/>
            <person name="Tammoja K."/>
            <person name="Tan S.L."/>
            <person name="Tang S."/>
            <person name="Taylor M.S."/>
            <person name="Tegner J."/>
            <person name="Teichmann S.A."/>
            <person name="Ueda H.R."/>
            <person name="van Nimwegen E."/>
            <person name="Verardo R."/>
            <person name="Wei C.L."/>
            <person name="Yagi K."/>
            <person name="Yamanishi H."/>
            <person name="Zabarovsky E."/>
            <person name="Zhu S."/>
            <person name="Zimmer A."/>
            <person name="Hide W."/>
            <person name="Bult C."/>
            <person name="Grimmond S.M."/>
            <person name="Teasdale R.D."/>
            <person name="Liu E.T."/>
            <person name="Brusic V."/>
            <person name="Quackenbush J."/>
            <person name="Wahlestedt C."/>
            <person name="Mattick J.S."/>
            <person name="Hume D.A."/>
            <person name="Kai C."/>
            <person name="Sasaki D."/>
            <person name="Tomaru Y."/>
            <person name="Fukuda S."/>
            <person name="Kanamori-Katayama M."/>
            <person name="Suzuki M."/>
            <person name="Aoki J."/>
            <person name="Arakawa T."/>
            <person name="Iida J."/>
            <person name="Imamura K."/>
            <person name="Itoh M."/>
            <person name="Kato T."/>
            <person name="Kawaji H."/>
            <person name="Kawagashira N."/>
            <person name="Kawashima T."/>
            <person name="Kojima M."/>
            <person name="Kondo S."/>
            <person name="Konno H."/>
            <person name="Nakano K."/>
            <person name="Ninomiya N."/>
            <person name="Nishio T."/>
            <person name="Okada M."/>
            <person name="Plessy C."/>
            <person name="Shibata K."/>
            <person name="Shiraki T."/>
            <person name="Suzuki S."/>
            <person name="Tagami M."/>
            <person name="Waki K."/>
            <person name="Watahiki A."/>
            <person name="Okamura-Oho Y."/>
            <person name="Suzuki H."/>
            <person name="Kawai J."/>
            <person name="Hayashizaki Y."/>
        </authorList>
    </citation>
    <scope>NUCLEOTIDE SEQUENCE [LARGE SCALE MRNA] (ISOFORM 3)</scope>
    <scope>NUCLEOTIDE SEQUENCE [LARGE SCALE MRNA] OF 1-751 (ISOFORM 2)</scope>
    <source>
        <strain>C57BL/6J</strain>
        <tissue>Corpus striatum</tissue>
        <tissue>Thymus</tissue>
    </source>
</reference>
<reference key="3">
    <citation type="journal article" date="2009" name="PLoS Biol.">
        <title>Lineage-specific biology revealed by a finished genome assembly of the mouse.</title>
        <authorList>
            <person name="Church D.M."/>
            <person name="Goodstadt L."/>
            <person name="Hillier L.W."/>
            <person name="Zody M.C."/>
            <person name="Goldstein S."/>
            <person name="She X."/>
            <person name="Bult C.J."/>
            <person name="Agarwala R."/>
            <person name="Cherry J.L."/>
            <person name="DiCuccio M."/>
            <person name="Hlavina W."/>
            <person name="Kapustin Y."/>
            <person name="Meric P."/>
            <person name="Maglott D."/>
            <person name="Birtle Z."/>
            <person name="Marques A.C."/>
            <person name="Graves T."/>
            <person name="Zhou S."/>
            <person name="Teague B."/>
            <person name="Potamousis K."/>
            <person name="Churas C."/>
            <person name="Place M."/>
            <person name="Herschleb J."/>
            <person name="Runnheim R."/>
            <person name="Forrest D."/>
            <person name="Amos-Landgraf J."/>
            <person name="Schwartz D.C."/>
            <person name="Cheng Z."/>
            <person name="Lindblad-Toh K."/>
            <person name="Eichler E.E."/>
            <person name="Ponting C.P."/>
        </authorList>
    </citation>
    <scope>NUCLEOTIDE SEQUENCE [LARGE SCALE GENOMIC DNA]</scope>
    <source>
        <strain>C57BL/6J</strain>
    </source>
</reference>
<reference key="4">
    <citation type="submission" date="2009-01" db="UniProtKB">
        <authorList>
            <person name="Lubec G."/>
            <person name="Sunyer B."/>
            <person name="Chen W.-Q."/>
        </authorList>
    </citation>
    <scope>PROTEIN SEQUENCE OF 162-174</scope>
    <scope>IDENTIFICATION BY MASS SPECTROMETRY</scope>
    <source>
        <strain>OF1</strain>
        <tissue>Hippocampus</tissue>
    </source>
</reference>
<keyword id="KW-0010">Activator</keyword>
<keyword id="KW-0025">Alternative splicing</keyword>
<keyword id="KW-0903">Direct protein sequencing</keyword>
<keyword id="KW-0539">Nucleus</keyword>
<keyword id="KW-0597">Phosphoprotein</keyword>
<keyword id="KW-1185">Reference proteome</keyword>
<keyword id="KW-0678">Repressor</keyword>
<keyword id="KW-0804">Transcription</keyword>
<keyword id="KW-0805">Transcription regulation</keyword>
<name>MD12L_MOUSE</name>
<dbReference type="EMBL" id="AK129475">
    <property type="protein sequence ID" value="BAC98285.1"/>
    <property type="status" value="ALT_INIT"/>
    <property type="molecule type" value="mRNA"/>
</dbReference>
<dbReference type="EMBL" id="AK042296">
    <property type="protein sequence ID" value="BAC31219.1"/>
    <property type="molecule type" value="mRNA"/>
</dbReference>
<dbReference type="EMBL" id="AK047743">
    <property type="protein sequence ID" value="BAC33144.1"/>
    <property type="molecule type" value="mRNA"/>
</dbReference>
<dbReference type="EMBL" id="AC115919">
    <property type="status" value="NOT_ANNOTATED_CDS"/>
    <property type="molecule type" value="Genomic_DNA"/>
</dbReference>
<dbReference type="EMBL" id="AC122038">
    <property type="status" value="NOT_ANNOTATED_CDS"/>
    <property type="molecule type" value="Genomic_DNA"/>
</dbReference>
<dbReference type="RefSeq" id="NP_808523.2">
    <property type="nucleotide sequence ID" value="NM_177855.3"/>
</dbReference>
<dbReference type="SMR" id="Q8BQM9"/>
<dbReference type="BioGRID" id="236806">
    <property type="interactions" value="1"/>
</dbReference>
<dbReference type="FunCoup" id="Q8BQM9">
    <property type="interactions" value="523"/>
</dbReference>
<dbReference type="STRING" id="10090.ENSMUSP00000142903"/>
<dbReference type="GlyGen" id="Q8BQM9">
    <property type="glycosylation" value="2 sites"/>
</dbReference>
<dbReference type="iPTMnet" id="Q8BQM9"/>
<dbReference type="PhosphoSitePlus" id="Q8BQM9"/>
<dbReference type="jPOST" id="Q8BQM9"/>
<dbReference type="PaxDb" id="10090-ENSMUSP00000127038"/>
<dbReference type="PeptideAtlas" id="Q8BQM9"/>
<dbReference type="ProteomicsDB" id="293438">
    <molecule id="Q8BQM9-1"/>
</dbReference>
<dbReference type="ProteomicsDB" id="293439">
    <molecule id="Q8BQM9-2"/>
</dbReference>
<dbReference type="ProteomicsDB" id="293440">
    <molecule id="Q8BQM9-3"/>
</dbReference>
<dbReference type="ProteomicsDB" id="293441">
    <molecule id="Q8BQM9-4"/>
</dbReference>
<dbReference type="Antibodypedia" id="46744">
    <property type="antibodies" value="21 antibodies from 14 providers"/>
</dbReference>
<dbReference type="Ensembl" id="ENSMUST00000029393.15">
    <molecule id="Q8BQM9-3"/>
    <property type="protein sequence ID" value="ENSMUSP00000029393.9"/>
    <property type="gene ID" value="ENSMUSG00000056476.14"/>
</dbReference>
<dbReference type="Ensembl" id="ENSMUST00000040325.14">
    <molecule id="Q8BQM9-1"/>
    <property type="protein sequence ID" value="ENSMUSP00000042269.8"/>
    <property type="gene ID" value="ENSMUSG00000056476.14"/>
</dbReference>
<dbReference type="Ensembl" id="ENSMUST00000040846.15">
    <molecule id="Q8BQM9-3"/>
    <property type="protein sequence ID" value="ENSMUSP00000041859.10"/>
    <property type="gene ID" value="ENSMUSG00000056476.14"/>
</dbReference>
<dbReference type="Ensembl" id="ENSMUST00000164225.6">
    <molecule id="Q8BQM9-2"/>
    <property type="protein sequence ID" value="ENSMUSP00000127038.2"/>
    <property type="gene ID" value="ENSMUSG00000056476.14"/>
</dbReference>
<dbReference type="GeneID" id="329650"/>
<dbReference type="KEGG" id="mmu:329650"/>
<dbReference type="UCSC" id="uc008pig.1">
    <molecule id="Q8BQM9-3"/>
    <property type="organism name" value="mouse"/>
</dbReference>
<dbReference type="UCSC" id="uc008pih.1">
    <molecule id="Q8BQM9-4"/>
    <property type="organism name" value="mouse"/>
</dbReference>
<dbReference type="UCSC" id="uc008pii.2">
    <molecule id="Q8BQM9-2"/>
    <property type="organism name" value="mouse"/>
</dbReference>
<dbReference type="AGR" id="MGI:2139916"/>
<dbReference type="CTD" id="116931"/>
<dbReference type="MGI" id="MGI:2139916">
    <property type="gene designation" value="Med12l"/>
</dbReference>
<dbReference type="VEuPathDB" id="HostDB:ENSMUSG00000056476"/>
<dbReference type="eggNOG" id="KOG3598">
    <property type="taxonomic scope" value="Eukaryota"/>
</dbReference>
<dbReference type="GeneTree" id="ENSGT00440000037505"/>
<dbReference type="HOGENOM" id="CLU_000904_1_0_1"/>
<dbReference type="InParanoid" id="Q8BQM9"/>
<dbReference type="PhylomeDB" id="Q8BQM9"/>
<dbReference type="TreeFam" id="TF324178"/>
<dbReference type="BioGRID-ORCS" id="329650">
    <property type="hits" value="2 hits in 56 CRISPR screens"/>
</dbReference>
<dbReference type="ChiTaRS" id="Med12l">
    <property type="organism name" value="mouse"/>
</dbReference>
<dbReference type="PRO" id="PR:Q8BQM9"/>
<dbReference type="Proteomes" id="UP000000589">
    <property type="component" value="Chromosome 3"/>
</dbReference>
<dbReference type="RNAct" id="Q8BQM9">
    <property type="molecule type" value="protein"/>
</dbReference>
<dbReference type="Bgee" id="ENSMUSG00000056476">
    <property type="expression patterns" value="Expressed in substantia nigra and 182 other cell types or tissues"/>
</dbReference>
<dbReference type="ExpressionAtlas" id="Q8BQM9">
    <property type="expression patterns" value="baseline and differential"/>
</dbReference>
<dbReference type="GO" id="GO:0016592">
    <property type="term" value="C:mediator complex"/>
    <property type="evidence" value="ECO:0007669"/>
    <property type="project" value="InterPro"/>
</dbReference>
<dbReference type="GO" id="GO:0008013">
    <property type="term" value="F:beta-catenin binding"/>
    <property type="evidence" value="ECO:0007669"/>
    <property type="project" value="InterPro"/>
</dbReference>
<dbReference type="GO" id="GO:0003712">
    <property type="term" value="F:transcription coregulator activity"/>
    <property type="evidence" value="ECO:0007669"/>
    <property type="project" value="InterPro"/>
</dbReference>
<dbReference type="GO" id="GO:0006357">
    <property type="term" value="P:regulation of transcription by RNA polymerase II"/>
    <property type="evidence" value="ECO:0007669"/>
    <property type="project" value="InterPro"/>
</dbReference>
<dbReference type="InterPro" id="IPR051647">
    <property type="entry name" value="Mediator_comp_sub12"/>
</dbReference>
<dbReference type="InterPro" id="IPR019035">
    <property type="entry name" value="Mediator_Med12"/>
</dbReference>
<dbReference type="InterPro" id="IPR021989">
    <property type="entry name" value="Mediator_Med12_catenin-bd"/>
</dbReference>
<dbReference type="InterPro" id="IPR021990">
    <property type="entry name" value="Mediator_Med12_LCEWAV"/>
</dbReference>
<dbReference type="PANTHER" id="PTHR46007">
    <property type="entry name" value="MEDIATOR OF RNA POLYMERASE II TRANSCRIPTION SUBUNIT 12"/>
    <property type="match status" value="1"/>
</dbReference>
<dbReference type="PANTHER" id="PTHR46007:SF3">
    <property type="entry name" value="MEDIATOR OF RNA POLYMERASE II TRANSCRIPTION SUBUNIT 12-LIKE PROTEIN"/>
    <property type="match status" value="1"/>
</dbReference>
<dbReference type="Pfam" id="PF09497">
    <property type="entry name" value="Med12"/>
    <property type="match status" value="1"/>
</dbReference>
<dbReference type="Pfam" id="PF12145">
    <property type="entry name" value="Med12-LCEWAV"/>
    <property type="match status" value="1"/>
</dbReference>
<dbReference type="Pfam" id="PF12144">
    <property type="entry name" value="Med12-PQL"/>
    <property type="match status" value="1"/>
</dbReference>
<dbReference type="SMART" id="SM01281">
    <property type="entry name" value="Med12"/>
    <property type="match status" value="1"/>
</dbReference>
<comment type="function">
    <text evidence="1">May be a component of the Mediator complex, a coactivator involved in the regulated transcription of nearly all RNA polymerase II-dependent genes. Mediator functions as a bridge to convey information from gene-specific regulatory proteins to the basal RNA polymerase II transcription machinery. Mediator is recruited to promoters by direct interactions with regulatory proteins and serves as a scaffold for the assembly of a functional preinitiation complex with RNA polymerase II and the general transcription factors (By similarity).</text>
</comment>
<comment type="subunit">
    <text evidence="1">May be a component of the Mediator complex, which is known to be composed of MED1, MED4, MED6, MED7, MED8, MED9, MED10, MED11, MED12, MED13, MED13L, MED14, MED15, MED16, MED17, MED18, MED19, MED20, MED21, MED22, MED23, MED24, MED25, MED26, MED27, MED29, MED30, MED31, CCNC, CDK8 and CDC2L6/CDK11. The MED12, MED13, CCNC and CDK8 subunits form a distinct module termed the CDK8 module. Mediator containing the CDK8 module is less active than Mediator lacking this module in supporting transcriptional activation. Individual preparations of the Mediator complex lacking one or more distinct subunits have been variously termed ARC, CRSP, DRIP, PC2, SMCC and TRAP (By similarity).</text>
</comment>
<comment type="subcellular location">
    <subcellularLocation>
        <location evidence="6">Nucleus</location>
    </subcellularLocation>
</comment>
<comment type="alternative products">
    <event type="alternative splicing"/>
    <isoform>
        <id>Q8BQM9-1</id>
        <name>1</name>
        <sequence type="displayed"/>
    </isoform>
    <isoform>
        <id>Q8BQM9-2</id>
        <name>2</name>
        <sequence type="described" ref="VSP_029999"/>
    </isoform>
    <isoform>
        <id>Q8BQM9-3</id>
        <name>3</name>
        <sequence type="described" ref="VSP_029998 VSP_030000 VSP_030003"/>
    </isoform>
    <isoform>
        <id>Q8BQM9-4</id>
        <name>4</name>
        <sequence type="described" ref="VSP_029998 VSP_030001 VSP_030002"/>
    </isoform>
</comment>
<comment type="similarity">
    <text evidence="6">Belongs to the Mediator complex subunit 12 family.</text>
</comment>
<comment type="sequence caution" evidence="6">
    <conflict type="erroneous initiation">
        <sequence resource="EMBL-CDS" id="BAC98285"/>
    </conflict>
</comment>
<protein>
    <recommendedName>
        <fullName>Mediator of RNA polymerase II transcription subunit 12-like protein</fullName>
    </recommendedName>
    <alternativeName>
        <fullName>Mediator complex subunit 12-like protein</fullName>
    </alternativeName>
</protein>
<accession>Q8BQM9</accession>
<accession>Q6ZPF2</accession>
<accession>Q8C9E3</accession>
<sequence>MAAFGLLSYEQRPLKRPRLGPPDVYPQDPKQKEDELTAVNVKQGFNNQPAFTGDEHGSARNIVINPSKIGAYFSSILAEKLKLNTFQDTGKKKPQVNAKDNYWLVTARSQSAIHSWFSDLAGNKPLAILAKKVPILSKKEDVFAYLAKYSVPMVRATWLIKMTCAYYSAISEAKIKKRQAPDPNLEWTQISTRYLREQLVKISDFYHMASSTGDGPVPVPPEVEQAMKQWEYNEKLAFHMFQEGMLEKHEYLTWILDVLEKIRPVDDSLLKLLLPLMLQYSDEFVQSAYLSRRLAYFCARRLSLLLSDSPNLLAAHSPHMIIGTNNTSIGTPSPGTPGPGMSPVQLAFSDFLSCAQHGPLVYGLSCMLQTVTLCCPSALVWNYSTNENKISNPGSPLDLLQVAPSSLPMPGGNTAFNQQVRARIYEVEQQIKQRGRAVEVRWSFDKCQESTAGVTISRVLHTLEVLDRHCFDRTDSSNSMETLYHKIFWANQNKDNQEVAPNDEAVVTLLCEWAVSCKRSGKHRAMAVAKLLEKRQAEIEAERCGESEVLDEKESISSASLAGSSLPVFQNVLLRFLDTQAPALSDPNSECEKVEFVNLVLLFCEFIRHDVFSHDAYMCTLISRGDLSVTASTGLRSPAGENSDEHYSKDHDMKMEIFSPMPGESCENINPSLSRRLSVNGEKLLKREKPRELIFPSNYDLLRHLQYATHFPIPLDESSSHECNQRTILLYGVGKERDEARHQLKKITKDILKILNKKGTTESGVGDEGQKARKTKQEVFPTPENVFTKLQLLSYFDQHQVTSQISNNVLEQITSFASGTSYHLPLAHHIQLIFDLMEPALNINGLIDFAIQLLNELSVVEAELLLKSSSLAGSYTTGLCVCIVAVLRRYHSCLILNPDQTAQVFEGLCGVVKHVVNPSECSSPERCILAYLYDLYVSCSHLRSKFGDLFSSACSKVKQTIYNNVMPANSNLRWDPDFMMDFIENPSARSINYSMLGKILNDNAANRYSFVCNTLMNVCMGHQDAGRINDIANFSSELTACCTVLSSEWLGVLKALCCSSNHVWGFNDVLCTVDVSDLSFHDSLATFIAILIARQCFSLEDVVQHVALPSLLAAACGDADAEPGARMTCRLLLHLFRAPQACFFPQGTGKPFPGIRSSCDRHLLAAAHNSIEVGAVFAVLKAIMMLGDAKIGSNNVNTMKNEDFGMRGLRRDGNAEDAWATSQNSKSYGKSISIETANLREYARYVLRTICQQEWVGEHCLKEPERLCTDKELILDPVLSNMQAQKLLQLICYPHGIKECTEGDNLQRQHIKRILQNLEQWTLRQSWLELQLMIKQCLKDPSSGSVAEMNNLLDNIAKATIEVFQQSADLNNNASNSGMSLFNPNTIGSVDPSSTRQNGIKTFLSSSERRGVWLVAPLIARLPTSVQGRVLKAAGEELEKGQHLGSSSKKERDRQKQKSMSLLSQQPFLSLVLTCLKGQDEQREGLLTSLQNQVNQILSNWREERYQDDTKARQMMHEALQLRLNLVGGMFDTVQRSTQGTTDWALLLLQIITSGTVDMHTNNELFTTVLDMLGVLINGTLASDLSSASPGGSEENKRAYMNLVKKLKKELGDKRSESIDKVRQLLPLPKQTCDVITCEPMGSLIDTKGNKIAGFDSIDKKQARGLQVSTKQKVSPWDLFEGQKNPAPLSWAWFGTVRVDRKVIKYEEQQHFLLYHTHTMPKPRSYYLEPLPLPPEEEEEELTSPVSQEPERKSAELSDQGKATADEEKKTKGRKRKTKSSSRIDEYQQTNLYRVPPNYSPMSSQMTHHPQPALWGYNLVSQPQQPSFFLQNPSLNPGGSRLDPAGSFVPTNTKQALSNMLQRRSGAMLQPPSLHAVTSQQQLLQMKLLQQQQQQQQQQQQQQQRLLRQAQTRPFQQGQPGDQAALFTAQARPSPQLPQYPGLQQAQTMPQGYTMYGTQMPLQQAAQQQPGGVVLSPSYNSRAYPAAHSSPALMERLRQLQQQPSGYVQQQASPYLQPVAGSQRLNHQALQQSPLVGGGIDAVLTPAHPNLPSVPLPQDPMRPRQQQVRQQQRLLQVWGREMQQPQQAPQPQQPSQTQSQALGLQAMQPQQPLFPRQGLQQTQQQQQTAALVRQLQKQLSSNQPQQGVTPCAHPSHF</sequence>
<organism>
    <name type="scientific">Mus musculus</name>
    <name type="common">Mouse</name>
    <dbReference type="NCBI Taxonomy" id="10090"/>
    <lineage>
        <taxon>Eukaryota</taxon>
        <taxon>Metazoa</taxon>
        <taxon>Chordata</taxon>
        <taxon>Craniata</taxon>
        <taxon>Vertebrata</taxon>
        <taxon>Euteleostomi</taxon>
        <taxon>Mammalia</taxon>
        <taxon>Eutheria</taxon>
        <taxon>Euarchontoglires</taxon>
        <taxon>Glires</taxon>
        <taxon>Rodentia</taxon>
        <taxon>Myomorpha</taxon>
        <taxon>Muroidea</taxon>
        <taxon>Muridae</taxon>
        <taxon>Murinae</taxon>
        <taxon>Mus</taxon>
        <taxon>Mus</taxon>
    </lineage>
</organism>
<evidence type="ECO:0000250" key="1"/>
<evidence type="ECO:0000250" key="2">
    <source>
        <dbReference type="UniProtKB" id="Q86YW9"/>
    </source>
</evidence>
<evidence type="ECO:0000256" key="3">
    <source>
        <dbReference type="SAM" id="MobiDB-lite"/>
    </source>
</evidence>
<evidence type="ECO:0000303" key="4">
    <source>
    </source>
</evidence>
<evidence type="ECO:0000303" key="5">
    <source>
    </source>
</evidence>
<evidence type="ECO:0000305" key="6"/>
<proteinExistence type="evidence at protein level"/>